<proteinExistence type="inferred from homology"/>
<evidence type="ECO:0000255" key="1">
    <source>
        <dbReference type="HAMAP-Rule" id="MF_00033"/>
    </source>
</evidence>
<dbReference type="EC" id="2.4.1.227" evidence="1"/>
<dbReference type="EMBL" id="CP001074">
    <property type="protein sequence ID" value="ACE91947.1"/>
    <property type="molecule type" value="Genomic_DNA"/>
</dbReference>
<dbReference type="SMR" id="B3PTW0"/>
<dbReference type="CAZy" id="GT28">
    <property type="family name" value="Glycosyltransferase Family 28"/>
</dbReference>
<dbReference type="KEGG" id="rec:RHECIAT_CH0002998"/>
<dbReference type="eggNOG" id="COG0707">
    <property type="taxonomic scope" value="Bacteria"/>
</dbReference>
<dbReference type="HOGENOM" id="CLU_037404_2_1_5"/>
<dbReference type="UniPathway" id="UPA00219"/>
<dbReference type="Proteomes" id="UP000008817">
    <property type="component" value="Chromosome"/>
</dbReference>
<dbReference type="GO" id="GO:0005886">
    <property type="term" value="C:plasma membrane"/>
    <property type="evidence" value="ECO:0007669"/>
    <property type="project" value="UniProtKB-SubCell"/>
</dbReference>
<dbReference type="GO" id="GO:0051991">
    <property type="term" value="F:UDP-N-acetyl-D-glucosamine:N-acetylmuramoyl-L-alanyl-D-glutamyl-meso-2,6-diaminopimelyl-D-alanyl-D-alanine-diphosphoundecaprenol 4-beta-N-acetylglucosaminlytransferase activity"/>
    <property type="evidence" value="ECO:0007669"/>
    <property type="project" value="RHEA"/>
</dbReference>
<dbReference type="GO" id="GO:0050511">
    <property type="term" value="F:undecaprenyldiphospho-muramoylpentapeptide beta-N-acetylglucosaminyltransferase activity"/>
    <property type="evidence" value="ECO:0007669"/>
    <property type="project" value="UniProtKB-UniRule"/>
</dbReference>
<dbReference type="GO" id="GO:0005975">
    <property type="term" value="P:carbohydrate metabolic process"/>
    <property type="evidence" value="ECO:0007669"/>
    <property type="project" value="InterPro"/>
</dbReference>
<dbReference type="GO" id="GO:0051301">
    <property type="term" value="P:cell division"/>
    <property type="evidence" value="ECO:0007669"/>
    <property type="project" value="UniProtKB-KW"/>
</dbReference>
<dbReference type="GO" id="GO:0071555">
    <property type="term" value="P:cell wall organization"/>
    <property type="evidence" value="ECO:0007669"/>
    <property type="project" value="UniProtKB-KW"/>
</dbReference>
<dbReference type="GO" id="GO:0030259">
    <property type="term" value="P:lipid glycosylation"/>
    <property type="evidence" value="ECO:0007669"/>
    <property type="project" value="UniProtKB-UniRule"/>
</dbReference>
<dbReference type="GO" id="GO:0009252">
    <property type="term" value="P:peptidoglycan biosynthetic process"/>
    <property type="evidence" value="ECO:0007669"/>
    <property type="project" value="UniProtKB-UniRule"/>
</dbReference>
<dbReference type="GO" id="GO:0008360">
    <property type="term" value="P:regulation of cell shape"/>
    <property type="evidence" value="ECO:0007669"/>
    <property type="project" value="UniProtKB-KW"/>
</dbReference>
<dbReference type="CDD" id="cd03785">
    <property type="entry name" value="GT28_MurG"/>
    <property type="match status" value="1"/>
</dbReference>
<dbReference type="Gene3D" id="3.40.50.2000">
    <property type="entry name" value="Glycogen Phosphorylase B"/>
    <property type="match status" value="2"/>
</dbReference>
<dbReference type="HAMAP" id="MF_00033">
    <property type="entry name" value="MurG"/>
    <property type="match status" value="1"/>
</dbReference>
<dbReference type="InterPro" id="IPR006009">
    <property type="entry name" value="GlcNAc_MurG"/>
</dbReference>
<dbReference type="InterPro" id="IPR007235">
    <property type="entry name" value="Glyco_trans_28_C"/>
</dbReference>
<dbReference type="InterPro" id="IPR004276">
    <property type="entry name" value="GlycoTrans_28_N"/>
</dbReference>
<dbReference type="NCBIfam" id="TIGR01133">
    <property type="entry name" value="murG"/>
    <property type="match status" value="1"/>
</dbReference>
<dbReference type="PANTHER" id="PTHR21015:SF22">
    <property type="entry name" value="GLYCOSYLTRANSFERASE"/>
    <property type="match status" value="1"/>
</dbReference>
<dbReference type="PANTHER" id="PTHR21015">
    <property type="entry name" value="UDP-N-ACETYLGLUCOSAMINE--N-ACETYLMURAMYL-(PENTAPEPTIDE) PYROPHOSPHORYL-UNDECAPRENOL N-ACETYLGLUCOSAMINE TRANSFERASE 1"/>
    <property type="match status" value="1"/>
</dbReference>
<dbReference type="Pfam" id="PF04101">
    <property type="entry name" value="Glyco_tran_28_C"/>
    <property type="match status" value="1"/>
</dbReference>
<dbReference type="Pfam" id="PF03033">
    <property type="entry name" value="Glyco_transf_28"/>
    <property type="match status" value="1"/>
</dbReference>
<dbReference type="SUPFAM" id="SSF53756">
    <property type="entry name" value="UDP-Glycosyltransferase/glycogen phosphorylase"/>
    <property type="match status" value="1"/>
</dbReference>
<sequence>MSKGIVLLAAGGTGGHVFPAEALAFKLKERGYSVHLVTDSRAERFAGKFPAEEIHVVPSATIGSKNPVAVARSLWTLWSGMRAAKKLIQRLKPVIVVGFGGYPTVPPLLAATRLGIASMLHEQNAVMGRANKALAPRVKAIAGGFLQESGDVFSDKTVATGNPVRPAILAAAEQPYHPSHPGEPFNLVVFGGSQGAQYFSKAMPTAISLLDDELRARLRVTQQVRPEDMEMVRGCVAQLQMGADIAPFFNDMAERLAKAHLVICRSGASTVSEISVIGRPAVLVPYPHALDHDQAANAAALAATGGAKVIVQSELSPERIASILSHVMNDPEKLSHMAAAAKLAGKPDAANLLADMVEAIAAGKTVSEFKRTRA</sequence>
<reference key="1">
    <citation type="journal article" date="2010" name="Appl. Environ. Microbiol.">
        <title>Conserved symbiotic plasmid DNA sequences in the multireplicon pangenomic structure of Rhizobium etli.</title>
        <authorList>
            <person name="Gonzalez V."/>
            <person name="Acosta J.L."/>
            <person name="Santamaria R.I."/>
            <person name="Bustos P."/>
            <person name="Fernandez J.L."/>
            <person name="Hernandez Gonzalez I.L."/>
            <person name="Diaz R."/>
            <person name="Flores M."/>
            <person name="Palacios R."/>
            <person name="Mora J."/>
            <person name="Davila G."/>
        </authorList>
    </citation>
    <scope>NUCLEOTIDE SEQUENCE [LARGE SCALE GENOMIC DNA]</scope>
    <source>
        <strain>CIAT 652</strain>
    </source>
</reference>
<keyword id="KW-0131">Cell cycle</keyword>
<keyword id="KW-0132">Cell division</keyword>
<keyword id="KW-0997">Cell inner membrane</keyword>
<keyword id="KW-1003">Cell membrane</keyword>
<keyword id="KW-0133">Cell shape</keyword>
<keyword id="KW-0961">Cell wall biogenesis/degradation</keyword>
<keyword id="KW-0328">Glycosyltransferase</keyword>
<keyword id="KW-0472">Membrane</keyword>
<keyword id="KW-0573">Peptidoglycan synthesis</keyword>
<keyword id="KW-0808">Transferase</keyword>
<organism>
    <name type="scientific">Rhizobium etli (strain CIAT 652)</name>
    <dbReference type="NCBI Taxonomy" id="491916"/>
    <lineage>
        <taxon>Bacteria</taxon>
        <taxon>Pseudomonadati</taxon>
        <taxon>Pseudomonadota</taxon>
        <taxon>Alphaproteobacteria</taxon>
        <taxon>Hyphomicrobiales</taxon>
        <taxon>Rhizobiaceae</taxon>
        <taxon>Rhizobium/Agrobacterium group</taxon>
        <taxon>Rhizobium</taxon>
    </lineage>
</organism>
<comment type="function">
    <text evidence="1">Cell wall formation. Catalyzes the transfer of a GlcNAc subunit on undecaprenyl-pyrophosphoryl-MurNAc-pentapeptide (lipid intermediate I) to form undecaprenyl-pyrophosphoryl-MurNAc-(pentapeptide)GlcNAc (lipid intermediate II).</text>
</comment>
<comment type="catalytic activity">
    <reaction evidence="1">
        <text>di-trans,octa-cis-undecaprenyl diphospho-N-acetyl-alpha-D-muramoyl-L-alanyl-D-glutamyl-meso-2,6-diaminopimeloyl-D-alanyl-D-alanine + UDP-N-acetyl-alpha-D-glucosamine = di-trans,octa-cis-undecaprenyl diphospho-[N-acetyl-alpha-D-glucosaminyl-(1-&gt;4)]-N-acetyl-alpha-D-muramoyl-L-alanyl-D-glutamyl-meso-2,6-diaminopimeloyl-D-alanyl-D-alanine + UDP + H(+)</text>
        <dbReference type="Rhea" id="RHEA:31227"/>
        <dbReference type="ChEBI" id="CHEBI:15378"/>
        <dbReference type="ChEBI" id="CHEBI:57705"/>
        <dbReference type="ChEBI" id="CHEBI:58223"/>
        <dbReference type="ChEBI" id="CHEBI:61387"/>
        <dbReference type="ChEBI" id="CHEBI:61388"/>
        <dbReference type="EC" id="2.4.1.227"/>
    </reaction>
</comment>
<comment type="pathway">
    <text evidence="1">Cell wall biogenesis; peptidoglycan biosynthesis.</text>
</comment>
<comment type="subcellular location">
    <subcellularLocation>
        <location evidence="1">Cell inner membrane</location>
        <topology evidence="1">Peripheral membrane protein</topology>
        <orientation evidence="1">Cytoplasmic side</orientation>
    </subcellularLocation>
</comment>
<comment type="similarity">
    <text evidence="1">Belongs to the glycosyltransferase 28 family. MurG subfamily.</text>
</comment>
<protein>
    <recommendedName>
        <fullName evidence="1">UDP-N-acetylglucosamine--N-acetylmuramyl-(pentapeptide) pyrophosphoryl-undecaprenol N-acetylglucosamine transferase</fullName>
        <ecNumber evidence="1">2.4.1.227</ecNumber>
    </recommendedName>
    <alternativeName>
        <fullName evidence="1">Undecaprenyl-PP-MurNAc-pentapeptide-UDPGlcNAc GlcNAc transferase</fullName>
    </alternativeName>
</protein>
<gene>
    <name evidence="1" type="primary">murG</name>
    <name type="ordered locus">RHECIAT_CH0002998</name>
</gene>
<name>MURG_RHIE6</name>
<accession>B3PTW0</accession>
<feature type="chain" id="PRO_1000090463" description="UDP-N-acetylglucosamine--N-acetylmuramyl-(pentapeptide) pyrophosphoryl-undecaprenol N-acetylglucosamine transferase">
    <location>
        <begin position="1"/>
        <end position="374"/>
    </location>
</feature>
<feature type="binding site" evidence="1">
    <location>
        <begin position="13"/>
        <end position="15"/>
    </location>
    <ligand>
        <name>UDP-N-acetyl-alpha-D-glucosamine</name>
        <dbReference type="ChEBI" id="CHEBI:57705"/>
    </ligand>
</feature>
<feature type="binding site" evidence="1">
    <location>
        <position position="124"/>
    </location>
    <ligand>
        <name>UDP-N-acetyl-alpha-D-glucosamine</name>
        <dbReference type="ChEBI" id="CHEBI:57705"/>
    </ligand>
</feature>
<feature type="binding site" evidence="1">
    <location>
        <position position="165"/>
    </location>
    <ligand>
        <name>UDP-N-acetyl-alpha-D-glucosamine</name>
        <dbReference type="ChEBI" id="CHEBI:57705"/>
    </ligand>
</feature>
<feature type="binding site" evidence="1">
    <location>
        <position position="193"/>
    </location>
    <ligand>
        <name>UDP-N-acetyl-alpha-D-glucosamine</name>
        <dbReference type="ChEBI" id="CHEBI:57705"/>
    </ligand>
</feature>
<feature type="binding site" evidence="1">
    <location>
        <position position="294"/>
    </location>
    <ligand>
        <name>UDP-N-acetyl-alpha-D-glucosamine</name>
        <dbReference type="ChEBI" id="CHEBI:57705"/>
    </ligand>
</feature>